<reference key="1">
    <citation type="submission" date="2006-08" db="EMBL/GenBank/DDBJ databases">
        <title>Origin and evolution of North American polyploid Silene (Caryophyllaceae).</title>
        <authorList>
            <person name="Popp M."/>
            <person name="Oxelman B."/>
        </authorList>
    </citation>
    <scope>NUCLEOTIDE SEQUENCE [GENOMIC DNA]</scope>
</reference>
<geneLocation type="chloroplast"/>
<evidence type="ECO:0000255" key="1">
    <source>
        <dbReference type="HAMAP-Rule" id="MF_00433"/>
    </source>
</evidence>
<accession>Q06DU1</accession>
<protein>
    <recommendedName>
        <fullName evidence="1">Cytochrome b6-f complex subunit 6</fullName>
    </recommendedName>
    <alternativeName>
        <fullName evidence="1">Cytochrome b6-f complex subunit PetL</fullName>
    </alternativeName>
    <alternativeName>
        <fullName evidence="1">Cytochrome b6-f complex subunit VI</fullName>
    </alternativeName>
</protein>
<comment type="function">
    <text evidence="1">Component of the cytochrome b6-f complex, which mediates electron transfer between photosystem II (PSII) and photosystem I (PSI), cyclic electron flow around PSI, and state transitions. PetL is important for photoautotrophic growth as well as for electron transfer efficiency and stability of the cytochrome b6-f complex.</text>
</comment>
<comment type="subunit">
    <text evidence="1">The 4 large subunits of the cytochrome b6-f complex are cytochrome b6, subunit IV (17 kDa polypeptide, PetD), cytochrome f and the Rieske protein, while the 4 small subunits are PetG, PetL, PetM and PetN. The complex functions as a dimer.</text>
</comment>
<comment type="subcellular location">
    <subcellularLocation>
        <location evidence="1">Plastid</location>
        <location evidence="1">Chloroplast thylakoid membrane</location>
        <topology evidence="1">Single-pass membrane protein</topology>
    </subcellularLocation>
</comment>
<comment type="similarity">
    <text evidence="1">Belongs to the PetL family.</text>
</comment>
<feature type="chain" id="PRO_0000278088" description="Cytochrome b6-f complex subunit 6">
    <location>
        <begin position="1"/>
        <end position="31"/>
    </location>
</feature>
<feature type="transmembrane region" description="Helical" evidence="1">
    <location>
        <begin position="4"/>
        <end position="24"/>
    </location>
</feature>
<dbReference type="EMBL" id="DQ908870">
    <property type="protein sequence ID" value="ABI83690.1"/>
    <property type="molecule type" value="Genomic_DNA"/>
</dbReference>
<dbReference type="RefSeq" id="YP_005089595.1">
    <property type="nucleotide sequence ID" value="NC_016730.1"/>
</dbReference>
<dbReference type="SMR" id="Q06DU1"/>
<dbReference type="GeneID" id="11541090"/>
<dbReference type="GO" id="GO:0009535">
    <property type="term" value="C:chloroplast thylakoid membrane"/>
    <property type="evidence" value="ECO:0007669"/>
    <property type="project" value="UniProtKB-SubCell"/>
</dbReference>
<dbReference type="GO" id="GO:0009512">
    <property type="term" value="C:cytochrome b6f complex"/>
    <property type="evidence" value="ECO:0007669"/>
    <property type="project" value="InterPro"/>
</dbReference>
<dbReference type="GO" id="GO:0045158">
    <property type="term" value="F:electron transporter, transferring electrons within cytochrome b6/f complex of photosystem II activity"/>
    <property type="evidence" value="ECO:0007669"/>
    <property type="project" value="UniProtKB-UniRule"/>
</dbReference>
<dbReference type="GO" id="GO:0015979">
    <property type="term" value="P:photosynthesis"/>
    <property type="evidence" value="ECO:0007669"/>
    <property type="project" value="UniProtKB-KW"/>
</dbReference>
<dbReference type="HAMAP" id="MF_00433">
    <property type="entry name" value="Cytb6_f_PetL"/>
    <property type="match status" value="1"/>
</dbReference>
<dbReference type="InterPro" id="IPR007802">
    <property type="entry name" value="Cyt_b6/f_cplx_su6"/>
</dbReference>
<dbReference type="PANTHER" id="PTHR37266">
    <property type="entry name" value="CYTOCHROME B6-F COMPLEX SUBUNIT 6"/>
    <property type="match status" value="1"/>
</dbReference>
<dbReference type="PANTHER" id="PTHR37266:SF1">
    <property type="entry name" value="CYTOCHROME B6-F COMPLEX SUBUNIT 6"/>
    <property type="match status" value="1"/>
</dbReference>
<dbReference type="Pfam" id="PF05115">
    <property type="entry name" value="PetL"/>
    <property type="match status" value="1"/>
</dbReference>
<gene>
    <name evidence="1" type="primary">petL</name>
</gene>
<organism>
    <name type="scientific">Silene latifolia</name>
    <name type="common">White campion</name>
    <name type="synonym">Bladder campion</name>
    <dbReference type="NCBI Taxonomy" id="37657"/>
    <lineage>
        <taxon>Eukaryota</taxon>
        <taxon>Viridiplantae</taxon>
        <taxon>Streptophyta</taxon>
        <taxon>Embryophyta</taxon>
        <taxon>Tracheophyta</taxon>
        <taxon>Spermatophyta</taxon>
        <taxon>Magnoliopsida</taxon>
        <taxon>eudicotyledons</taxon>
        <taxon>Gunneridae</taxon>
        <taxon>Pentapetalae</taxon>
        <taxon>Caryophyllales</taxon>
        <taxon>Caryophyllaceae</taxon>
        <taxon>Sileneae</taxon>
        <taxon>Silene</taxon>
        <taxon>Silene subgen. Behenantha</taxon>
        <taxon>Silene sect. Melandrium</taxon>
    </lineage>
</organism>
<sequence>MPTLTSYFGFLLAALTITSVLFIGLNKIRLI</sequence>
<proteinExistence type="inferred from homology"/>
<name>PETL_SILLA</name>
<keyword id="KW-0150">Chloroplast</keyword>
<keyword id="KW-0249">Electron transport</keyword>
<keyword id="KW-0472">Membrane</keyword>
<keyword id="KW-0602">Photosynthesis</keyword>
<keyword id="KW-0934">Plastid</keyword>
<keyword id="KW-0793">Thylakoid</keyword>
<keyword id="KW-0812">Transmembrane</keyword>
<keyword id="KW-1133">Transmembrane helix</keyword>
<keyword id="KW-0813">Transport</keyword>